<sequence>MALLQISEPGLSAAPHQRRLAVGIDLGTTHSLVATVRSGEAQTLVDSDGRDLLPSVVHYRRDGHSVGWQARDNAARDPENTVSSVKRLMGRSLDDIQQRYPHLPYRFHASDNGLPLIQTPAGNLNPIQVSADILSALAARAEAALGGVPDGVVITVPAYFDDAQRQGTKDAARLAGLHVLRLLNEPTAAAIAYGLDSGKEGVIAIYDLGGGTFDISILRLSRGVFEVLATGGDSALGGDDFDHLLAEWLREQAGIHDRDDRQLDHALRAAAVKAKIALSSAESASVSIAGWQGDITREQFDSLIAPLVKRTLLSCRRTLKDAGLTPEEVLEVVMVGGSTRVPLVREQVGTFFGRTPLTSIDPDKVVAMGAAIQADILVGNKPDSDMLLLDVIPLSLGLETMGGLVEKIIPRNTTIPVARAQEFTTFKDGQSGMMIHVLQGEREMVADCRSLARFSLRGLPPLPAGGAHIRVTFQVDADGLLSVTAMEKSTGVEASIQVKPSYGLSDTEIATMITDSMLNAKEDVGARRLAEQKVEAARVLESLQSALVADAELLSNDEKGVIVAASEHLHTMMQGSDPVAIEAAIKTVDQQTQEFAARRMDASIRRALAGHSVDEV</sequence>
<dbReference type="EMBL" id="CP001657">
    <property type="protein sequence ID" value="ACT14050.1"/>
    <property type="molecule type" value="Genomic_DNA"/>
</dbReference>
<dbReference type="RefSeq" id="WP_015841202.1">
    <property type="nucleotide sequence ID" value="NC_012917.1"/>
</dbReference>
<dbReference type="SMR" id="C6DBI7"/>
<dbReference type="STRING" id="561230.PC1_3027"/>
<dbReference type="KEGG" id="pct:PC1_3027"/>
<dbReference type="eggNOG" id="COG0443">
    <property type="taxonomic scope" value="Bacteria"/>
</dbReference>
<dbReference type="HOGENOM" id="CLU_005965_2_1_6"/>
<dbReference type="OrthoDB" id="9766019at2"/>
<dbReference type="Proteomes" id="UP000002736">
    <property type="component" value="Chromosome"/>
</dbReference>
<dbReference type="GO" id="GO:0005524">
    <property type="term" value="F:ATP binding"/>
    <property type="evidence" value="ECO:0007669"/>
    <property type="project" value="UniProtKB-KW"/>
</dbReference>
<dbReference type="GO" id="GO:0016887">
    <property type="term" value="F:ATP hydrolysis activity"/>
    <property type="evidence" value="ECO:0007669"/>
    <property type="project" value="UniProtKB-UniRule"/>
</dbReference>
<dbReference type="GO" id="GO:0140662">
    <property type="term" value="F:ATP-dependent protein folding chaperone"/>
    <property type="evidence" value="ECO:0007669"/>
    <property type="project" value="InterPro"/>
</dbReference>
<dbReference type="GO" id="GO:0051082">
    <property type="term" value="F:unfolded protein binding"/>
    <property type="evidence" value="ECO:0007669"/>
    <property type="project" value="InterPro"/>
</dbReference>
<dbReference type="GO" id="GO:0016226">
    <property type="term" value="P:iron-sulfur cluster assembly"/>
    <property type="evidence" value="ECO:0007669"/>
    <property type="project" value="InterPro"/>
</dbReference>
<dbReference type="CDD" id="cd10236">
    <property type="entry name" value="ASKHA_NBD_HSP70_HscA"/>
    <property type="match status" value="1"/>
</dbReference>
<dbReference type="FunFam" id="3.30.420.40:FF:000046">
    <property type="entry name" value="Chaperone protein HscA"/>
    <property type="match status" value="1"/>
</dbReference>
<dbReference type="FunFam" id="2.60.34.10:FF:000005">
    <property type="entry name" value="Chaperone protein HscA homolog"/>
    <property type="match status" value="1"/>
</dbReference>
<dbReference type="FunFam" id="3.90.640.10:FF:000003">
    <property type="entry name" value="Molecular chaperone DnaK"/>
    <property type="match status" value="1"/>
</dbReference>
<dbReference type="Gene3D" id="1.20.1270.10">
    <property type="match status" value="1"/>
</dbReference>
<dbReference type="Gene3D" id="3.30.420.40">
    <property type="match status" value="2"/>
</dbReference>
<dbReference type="Gene3D" id="3.90.640.10">
    <property type="entry name" value="Actin, Chain A, domain 4"/>
    <property type="match status" value="1"/>
</dbReference>
<dbReference type="Gene3D" id="2.60.34.10">
    <property type="entry name" value="Substrate Binding Domain Of DNAk, Chain A, domain 1"/>
    <property type="match status" value="1"/>
</dbReference>
<dbReference type="HAMAP" id="MF_00679">
    <property type="entry name" value="HscA"/>
    <property type="match status" value="1"/>
</dbReference>
<dbReference type="InterPro" id="IPR043129">
    <property type="entry name" value="ATPase_NBD"/>
</dbReference>
<dbReference type="InterPro" id="IPR018181">
    <property type="entry name" value="Heat_shock_70_CS"/>
</dbReference>
<dbReference type="InterPro" id="IPR042039">
    <property type="entry name" value="HscA_NBD"/>
</dbReference>
<dbReference type="InterPro" id="IPR029048">
    <property type="entry name" value="HSP70_C_sf"/>
</dbReference>
<dbReference type="InterPro" id="IPR029047">
    <property type="entry name" value="HSP70_peptide-bd_sf"/>
</dbReference>
<dbReference type="InterPro" id="IPR013126">
    <property type="entry name" value="Hsp_70_fam"/>
</dbReference>
<dbReference type="InterPro" id="IPR010236">
    <property type="entry name" value="ISC_FeS_clus_asmbl_HscA"/>
</dbReference>
<dbReference type="NCBIfam" id="TIGR01991">
    <property type="entry name" value="HscA"/>
    <property type="match status" value="1"/>
</dbReference>
<dbReference type="NCBIfam" id="NF003520">
    <property type="entry name" value="PRK05183.1"/>
    <property type="match status" value="1"/>
</dbReference>
<dbReference type="PANTHER" id="PTHR19375">
    <property type="entry name" value="HEAT SHOCK PROTEIN 70KDA"/>
    <property type="match status" value="1"/>
</dbReference>
<dbReference type="Pfam" id="PF00012">
    <property type="entry name" value="HSP70"/>
    <property type="match status" value="1"/>
</dbReference>
<dbReference type="PRINTS" id="PR00301">
    <property type="entry name" value="HEATSHOCK70"/>
</dbReference>
<dbReference type="SUPFAM" id="SSF53067">
    <property type="entry name" value="Actin-like ATPase domain"/>
    <property type="match status" value="2"/>
</dbReference>
<dbReference type="SUPFAM" id="SSF100934">
    <property type="entry name" value="Heat shock protein 70kD (HSP70), C-terminal subdomain"/>
    <property type="match status" value="1"/>
</dbReference>
<dbReference type="SUPFAM" id="SSF100920">
    <property type="entry name" value="Heat shock protein 70kD (HSP70), peptide-binding domain"/>
    <property type="match status" value="1"/>
</dbReference>
<dbReference type="PROSITE" id="PS00297">
    <property type="entry name" value="HSP70_1"/>
    <property type="match status" value="1"/>
</dbReference>
<dbReference type="PROSITE" id="PS00329">
    <property type="entry name" value="HSP70_2"/>
    <property type="match status" value="1"/>
</dbReference>
<dbReference type="PROSITE" id="PS01036">
    <property type="entry name" value="HSP70_3"/>
    <property type="match status" value="1"/>
</dbReference>
<protein>
    <recommendedName>
        <fullName evidence="1">Chaperone protein HscA</fullName>
    </recommendedName>
    <alternativeName>
        <fullName evidence="1">Hsc66</fullName>
    </alternativeName>
</protein>
<keyword id="KW-0067">ATP-binding</keyword>
<keyword id="KW-0143">Chaperone</keyword>
<keyword id="KW-0547">Nucleotide-binding</keyword>
<proteinExistence type="inferred from homology"/>
<reference key="1">
    <citation type="submission" date="2009-07" db="EMBL/GenBank/DDBJ databases">
        <title>Complete sequence of Pectobacterium carotovorum subsp. carotovorum PC1.</title>
        <authorList>
            <consortium name="US DOE Joint Genome Institute"/>
            <person name="Lucas S."/>
            <person name="Copeland A."/>
            <person name="Lapidus A."/>
            <person name="Glavina del Rio T."/>
            <person name="Tice H."/>
            <person name="Bruce D."/>
            <person name="Goodwin L."/>
            <person name="Pitluck S."/>
            <person name="Munk A.C."/>
            <person name="Brettin T."/>
            <person name="Detter J.C."/>
            <person name="Han C."/>
            <person name="Tapia R."/>
            <person name="Larimer F."/>
            <person name="Land M."/>
            <person name="Hauser L."/>
            <person name="Kyrpides N."/>
            <person name="Mikhailova N."/>
            <person name="Balakrishnan V."/>
            <person name="Glasner J."/>
            <person name="Perna N.T."/>
        </authorList>
    </citation>
    <scope>NUCLEOTIDE SEQUENCE [LARGE SCALE GENOMIC DNA]</scope>
    <source>
        <strain>PC1</strain>
    </source>
</reference>
<accession>C6DBI7</accession>
<organism>
    <name type="scientific">Pectobacterium carotovorum subsp. carotovorum (strain PC1)</name>
    <dbReference type="NCBI Taxonomy" id="561230"/>
    <lineage>
        <taxon>Bacteria</taxon>
        <taxon>Pseudomonadati</taxon>
        <taxon>Pseudomonadota</taxon>
        <taxon>Gammaproteobacteria</taxon>
        <taxon>Enterobacterales</taxon>
        <taxon>Pectobacteriaceae</taxon>
        <taxon>Pectobacterium</taxon>
    </lineage>
</organism>
<name>HSCA_PECCP</name>
<evidence type="ECO:0000255" key="1">
    <source>
        <dbReference type="HAMAP-Rule" id="MF_00679"/>
    </source>
</evidence>
<comment type="function">
    <text evidence="1">Chaperone involved in the maturation of iron-sulfur cluster-containing proteins. Has a low intrinsic ATPase activity which is markedly stimulated by HscB. Involved in the maturation of IscU.</text>
</comment>
<comment type="similarity">
    <text evidence="1">Belongs to the heat shock protein 70 family.</text>
</comment>
<gene>
    <name evidence="1" type="primary">hscA</name>
    <name type="ordered locus">PC1_3027</name>
</gene>
<feature type="chain" id="PRO_1000212530" description="Chaperone protein HscA">
    <location>
        <begin position="1"/>
        <end position="616"/>
    </location>
</feature>